<proteinExistence type="evidence at protein level"/>
<sequence>GGDECNINEHRSPQETLPDVPHCANINLLDYEVCRTAHPQFRLPATSRTLCAGILEGGKDTCHR</sequence>
<reference evidence="5" key="1">
    <citation type="submission" date="2016-04" db="UniProtKB">
        <title>Identification of new serine protease isoforms from Crotalus durissus collilineatus venom.</title>
        <authorList>
            <person name="Boldrini-France J."/>
            <person name="Cologna C.T."/>
            <person name="de Pauw E."/>
            <person name="Quinton L."/>
            <person name="Arantes E.C."/>
        </authorList>
    </citation>
    <scope>PROTEIN SEQUENCE</scope>
    <scope>MASS SPECTROMETRY</scope>
    <scope>SUBCELLULAR LOCATION</scope>
    <source>
        <tissue evidence="4">Venom</tissue>
    </source>
</reference>
<evidence type="ECO:0000250" key="1">
    <source>
        <dbReference type="UniProtKB" id="A0A0S4FKT4"/>
    </source>
</evidence>
<evidence type="ECO:0000250" key="2">
    <source>
        <dbReference type="UniProtKB" id="Q9PSN3"/>
    </source>
</evidence>
<evidence type="ECO:0000269" key="3">
    <source ref="1"/>
</evidence>
<evidence type="ECO:0000303" key="4">
    <source ref="1"/>
</evidence>
<evidence type="ECO:0000305" key="5"/>
<evidence type="ECO:0000305" key="6">
    <source ref="1"/>
</evidence>
<accession>C0HK18</accession>
<feature type="chain" id="PRO_0000438332" description="Thrombin-like enzyme collinein-4">
    <location>
        <begin position="1" status="less than"/>
        <end position="64" status="greater than"/>
    </location>
</feature>
<feature type="disulfide bond" evidence="2">
    <location>
        <begin position="5"/>
        <end position="23"/>
    </location>
</feature>
<feature type="disulfide bond" evidence="2">
    <location>
        <begin position="34"/>
        <end position="51"/>
    </location>
</feature>
<feature type="disulfide bond" evidence="2">
    <location>
        <begin position="62"/>
        <end status="unknown"/>
    </location>
</feature>
<feature type="non-consecutive residues" evidence="4">
    <location>
        <begin position="11"/>
        <end position="12"/>
    </location>
</feature>
<feature type="non-terminal residue" evidence="4">
    <location>
        <position position="1"/>
    </location>
</feature>
<feature type="non-terminal residue" evidence="4">
    <location>
        <position position="64"/>
    </location>
</feature>
<name>VSP4_CRODO</name>
<dbReference type="EC" id="3.4.21.-" evidence="1"/>
<dbReference type="SMR" id="C0HK18"/>
<dbReference type="GO" id="GO:0005576">
    <property type="term" value="C:extracellular region"/>
    <property type="evidence" value="ECO:0007669"/>
    <property type="project" value="UniProtKB-SubCell"/>
</dbReference>
<dbReference type="GO" id="GO:0008236">
    <property type="term" value="F:serine-type peptidase activity"/>
    <property type="evidence" value="ECO:0007669"/>
    <property type="project" value="UniProtKB-KW"/>
</dbReference>
<dbReference type="GO" id="GO:0090729">
    <property type="term" value="F:toxin activity"/>
    <property type="evidence" value="ECO:0007669"/>
    <property type="project" value="UniProtKB-KW"/>
</dbReference>
<dbReference type="GO" id="GO:0006508">
    <property type="term" value="P:proteolysis"/>
    <property type="evidence" value="ECO:0007669"/>
    <property type="project" value="UniProtKB-KW"/>
</dbReference>
<dbReference type="Gene3D" id="2.40.10.10">
    <property type="entry name" value="Trypsin-like serine proteases"/>
    <property type="match status" value="1"/>
</dbReference>
<dbReference type="InterPro" id="IPR009003">
    <property type="entry name" value="Peptidase_S1_PA"/>
</dbReference>
<dbReference type="InterPro" id="IPR043504">
    <property type="entry name" value="Peptidase_S1_PA_chymotrypsin"/>
</dbReference>
<dbReference type="SUPFAM" id="SSF50494">
    <property type="entry name" value="Trypsin-like serine proteases"/>
    <property type="match status" value="1"/>
</dbReference>
<keyword id="KW-0903">Direct protein sequencing</keyword>
<keyword id="KW-1015">Disulfide bond</keyword>
<keyword id="KW-1206">Fibrinogenolytic toxin</keyword>
<keyword id="KW-1199">Hemostasis impairing toxin</keyword>
<keyword id="KW-0378">Hydrolase</keyword>
<keyword id="KW-0645">Protease</keyword>
<keyword id="KW-0964">Secreted</keyword>
<keyword id="KW-0720">Serine protease</keyword>
<keyword id="KW-0800">Toxin</keyword>
<organism evidence="4">
    <name type="scientific">Crotalus durissus collilineatus</name>
    <name type="common">Brazilian rattlesnake</name>
    <dbReference type="NCBI Taxonomy" id="221569"/>
    <lineage>
        <taxon>Eukaryota</taxon>
        <taxon>Metazoa</taxon>
        <taxon>Chordata</taxon>
        <taxon>Craniata</taxon>
        <taxon>Vertebrata</taxon>
        <taxon>Euteleostomi</taxon>
        <taxon>Lepidosauria</taxon>
        <taxon>Squamata</taxon>
        <taxon>Bifurcata</taxon>
        <taxon>Unidentata</taxon>
        <taxon>Episquamata</taxon>
        <taxon>Toxicofera</taxon>
        <taxon>Serpentes</taxon>
        <taxon>Colubroidea</taxon>
        <taxon>Viperidae</taxon>
        <taxon>Crotalinae</taxon>
        <taxon>Crotalus</taxon>
    </lineage>
</organism>
<comment type="function">
    <text evidence="1">Thrombin-like snake venom serine protease.</text>
</comment>
<comment type="subunit">
    <text evidence="5">Monomer.</text>
</comment>
<comment type="subcellular location">
    <subcellularLocation>
        <location evidence="3">Secreted</location>
    </subcellularLocation>
</comment>
<comment type="tissue specificity">
    <text evidence="6">Expressed by the vanom gland.</text>
</comment>
<comment type="mass spectrometry"/>
<comment type="similarity">
    <text evidence="5">Belongs to the peptidase S1 family.</text>
</comment>
<protein>
    <recommendedName>
        <fullName evidence="4">Thrombin-like enzyme collinein-4</fullName>
        <shortName evidence="4">SVTLE collinein-4</shortName>
        <ecNumber evidence="1">3.4.21.-</ecNumber>
    </recommendedName>
    <alternativeName>
        <fullName evidence="2">Fibrinogen-clotting enzyme</fullName>
    </alternativeName>
    <alternativeName>
        <fullName evidence="4">Snake venom serine protease</fullName>
        <shortName evidence="4">SVSP</shortName>
    </alternativeName>
</protein>